<sequence>ADKAASGVLTKLPQKQIQEMKEAFTMIDQNRDGFIDINDLKEMFSSLGRTPDDKELTAMLKEAPGPLNFTMFLSIFSDKLSGTDTEETLRNAFAMFDELDTKKLNIEYIKDLLENMGDNFTKDEMRMTFKEAPVTGGKFDYVKFTAMIKGSGEEEA</sequence>
<keyword id="KW-0106">Calcium</keyword>
<keyword id="KW-0903">Direct protein sequencing</keyword>
<keyword id="KW-0479">Metal-binding</keyword>
<keyword id="KW-0505">Motor protein</keyword>
<keyword id="KW-0514">Muscle protein</keyword>
<keyword id="KW-0518">Myosin</keyword>
<keyword id="KW-0677">Repeat</keyword>
<organism>
    <name type="scientific">Mizuhopecten yessoensis</name>
    <name type="common">Japanese scallop</name>
    <name type="synonym">Patinopecten yessoensis</name>
    <dbReference type="NCBI Taxonomy" id="6573"/>
    <lineage>
        <taxon>Eukaryota</taxon>
        <taxon>Metazoa</taxon>
        <taxon>Spiralia</taxon>
        <taxon>Lophotrochozoa</taxon>
        <taxon>Mollusca</taxon>
        <taxon>Bivalvia</taxon>
        <taxon>Autobranchia</taxon>
        <taxon>Pteriomorphia</taxon>
        <taxon>Pectinida</taxon>
        <taxon>Pectinoidea</taxon>
        <taxon>Pectinidae</taxon>
        <taxon>Mizuhopecten</taxon>
    </lineage>
</organism>
<evidence type="ECO:0000255" key="1">
    <source>
        <dbReference type="PROSITE-ProRule" id="PRU00448"/>
    </source>
</evidence>
<evidence type="ECO:0000269" key="2">
    <source>
    </source>
</evidence>
<proteinExistence type="evidence at protein level"/>
<comment type="function">
    <text>In molluscan muscle, calcium regulation is associated with myosin rather than with actin. Muscle myosin contains two types of light chains: the catalytic light chain, essential for ATPase activity, and the regulatory light chain, a calcium-binding protein responsible for Ca(2+) dependent binding and Ca(2+) dependent Mg-ATPase activity.</text>
</comment>
<comment type="miscellaneous">
    <text>Smooth muscle myosin from the scallop adductor muscle contains two kinds of RLC proteins, A and B.</text>
</comment>
<comment type="miscellaneous">
    <text>The calcium affinity of the smooth muscle RLC is approximately 10 times that of the RLC of striated muscle.</text>
</comment>
<feature type="chain" id="PRO_0000198756" description="Myosin regulatory light chain B, smooth adductor muscle">
    <location>
        <begin position="1"/>
        <end position="156"/>
    </location>
</feature>
<feature type="domain" description="EF-hand 1" evidence="1">
    <location>
        <begin position="15"/>
        <end position="50"/>
    </location>
</feature>
<feature type="domain" description="EF-hand 2" evidence="1">
    <location>
        <begin position="84"/>
        <end position="119"/>
    </location>
</feature>
<feature type="binding site" evidence="1">
    <location>
        <position position="28"/>
    </location>
    <ligand>
        <name>Ca(2+)</name>
        <dbReference type="ChEBI" id="CHEBI:29108"/>
    </ligand>
</feature>
<feature type="binding site" evidence="1">
    <location>
        <position position="30"/>
    </location>
    <ligand>
        <name>Ca(2+)</name>
        <dbReference type="ChEBI" id="CHEBI:29108"/>
    </ligand>
</feature>
<feature type="binding site" evidence="1">
    <location>
        <position position="32"/>
    </location>
    <ligand>
        <name>Ca(2+)</name>
        <dbReference type="ChEBI" id="CHEBI:29108"/>
    </ligand>
</feature>
<feature type="binding site" evidence="1">
    <location>
        <position position="39"/>
    </location>
    <ligand>
        <name>Ca(2+)</name>
        <dbReference type="ChEBI" id="CHEBI:29108"/>
    </ligand>
</feature>
<feature type="modified residue" description="Blocked amino end (Ala)" evidence="2">
    <location>
        <position position="1"/>
    </location>
</feature>
<reference key="1">
    <citation type="journal article" date="1985" name="J. Biochem.">
        <title>Amino acid sequences of the two kinds of regulatory light chains of adductor smooth muscle myosin from Patinopecten yessoensis.</title>
        <authorList>
            <person name="Miyanishi T."/>
            <person name="Maita T."/>
            <person name="Morita F."/>
            <person name="Kondo S."/>
            <person name="Matsuda G."/>
        </authorList>
    </citation>
    <scope>PROTEIN SEQUENCE</scope>
</reference>
<reference key="2">
    <citation type="journal article" date="1985" name="J. Biochem.">
        <title>Calcium binding and conformation of regulatory light chains of smooth muscle myosin of scallop.</title>
        <authorList>
            <person name="Morita F."/>
            <person name="Kondo S."/>
            <person name="Tomari K."/>
            <person name="Minova O."/>
            <person name="Ikura M."/>
            <person name="Hikichi K."/>
        </authorList>
    </citation>
    <scope>CALCIUM-BINDING DATA</scope>
</reference>
<name>MLRB_MIZYE</name>
<dbReference type="PIR" id="A03047">
    <property type="entry name" value="MOSWLB"/>
</dbReference>
<dbReference type="SMR" id="P04112"/>
<dbReference type="EnsemblMetazoa" id="XM_021495159.1">
    <property type="protein sequence ID" value="XP_021350834.1"/>
    <property type="gene ID" value="LOC110448741"/>
</dbReference>
<dbReference type="OrthoDB" id="429467at2759"/>
<dbReference type="GO" id="GO:0016459">
    <property type="term" value="C:myosin complex"/>
    <property type="evidence" value="ECO:0007669"/>
    <property type="project" value="UniProtKB-KW"/>
</dbReference>
<dbReference type="GO" id="GO:0005509">
    <property type="term" value="F:calcium ion binding"/>
    <property type="evidence" value="ECO:0007669"/>
    <property type="project" value="InterPro"/>
</dbReference>
<dbReference type="FunFam" id="1.10.238.10:FF:000007">
    <property type="entry name" value="Putative myosin regulatory light chain sqh"/>
    <property type="match status" value="1"/>
</dbReference>
<dbReference type="Gene3D" id="1.10.238.10">
    <property type="entry name" value="EF-hand"/>
    <property type="match status" value="2"/>
</dbReference>
<dbReference type="InterPro" id="IPR011992">
    <property type="entry name" value="EF-hand-dom_pair"/>
</dbReference>
<dbReference type="InterPro" id="IPR018247">
    <property type="entry name" value="EF_Hand_1_Ca_BS"/>
</dbReference>
<dbReference type="InterPro" id="IPR002048">
    <property type="entry name" value="EF_hand_dom"/>
</dbReference>
<dbReference type="InterPro" id="IPR050403">
    <property type="entry name" value="Myosin_RLC"/>
</dbReference>
<dbReference type="PANTHER" id="PTHR23049">
    <property type="entry name" value="MYOSIN REGULATORY LIGHT CHAIN 2"/>
    <property type="match status" value="1"/>
</dbReference>
<dbReference type="Pfam" id="PF13499">
    <property type="entry name" value="EF-hand_7"/>
    <property type="match status" value="1"/>
</dbReference>
<dbReference type="SMART" id="SM00054">
    <property type="entry name" value="EFh"/>
    <property type="match status" value="2"/>
</dbReference>
<dbReference type="SUPFAM" id="SSF47473">
    <property type="entry name" value="EF-hand"/>
    <property type="match status" value="1"/>
</dbReference>
<dbReference type="PROSITE" id="PS00018">
    <property type="entry name" value="EF_HAND_1"/>
    <property type="match status" value="1"/>
</dbReference>
<dbReference type="PROSITE" id="PS50222">
    <property type="entry name" value="EF_HAND_2"/>
    <property type="match status" value="2"/>
</dbReference>
<protein>
    <recommendedName>
        <fullName>Myosin regulatory light chain B, smooth adductor muscle</fullName>
    </recommendedName>
</protein>
<accession>P04112</accession>